<dbReference type="EC" id="5.3.4.1" evidence="1"/>
<dbReference type="EMBL" id="AK129451">
    <property type="protein sequence ID" value="BAC98261.1"/>
    <property type="status" value="ALT_INIT"/>
    <property type="molecule type" value="mRNA"/>
</dbReference>
<dbReference type="EMBL" id="AK035946">
    <property type="protein sequence ID" value="BAC29254.1"/>
    <property type="molecule type" value="mRNA"/>
</dbReference>
<dbReference type="EMBL" id="AK042787">
    <property type="protein sequence ID" value="BAC31366.2"/>
    <property type="molecule type" value="mRNA"/>
</dbReference>
<dbReference type="EMBL" id="AK140709">
    <property type="protein sequence ID" value="BAE24450.1"/>
    <property type="molecule type" value="mRNA"/>
</dbReference>
<dbReference type="EMBL" id="BC057139">
    <property type="status" value="NOT_ANNOTATED_CDS"/>
    <property type="molecule type" value="mRNA"/>
</dbReference>
<dbReference type="CCDS" id="CCDS37879.1"/>
<dbReference type="RefSeq" id="NP_938037.2">
    <property type="nucleotide sequence ID" value="NM_198295.3"/>
</dbReference>
<dbReference type="SMR" id="Q8BXZ1"/>
<dbReference type="BioGRID" id="212584">
    <property type="interactions" value="14"/>
</dbReference>
<dbReference type="FunCoup" id="Q8BXZ1">
    <property type="interactions" value="3670"/>
</dbReference>
<dbReference type="STRING" id="10090.ENSMUSP00000025515"/>
<dbReference type="GlyConnect" id="2623">
    <property type="glycosylation" value="10 N-Linked glycans (1 site)"/>
</dbReference>
<dbReference type="GlyCosmos" id="Q8BXZ1">
    <property type="glycosylation" value="3 sites, 10 glycans"/>
</dbReference>
<dbReference type="GlyGen" id="Q8BXZ1">
    <property type="glycosylation" value="3 sites, 12 N-linked glycans (2 sites)"/>
</dbReference>
<dbReference type="iPTMnet" id="Q8BXZ1"/>
<dbReference type="PhosphoSitePlus" id="Q8BXZ1"/>
<dbReference type="SwissPalm" id="Q8BXZ1"/>
<dbReference type="jPOST" id="Q8BXZ1"/>
<dbReference type="PaxDb" id="10090-ENSMUSP00000025515"/>
<dbReference type="PeptideAtlas" id="Q8BXZ1"/>
<dbReference type="ProteomicsDB" id="259271"/>
<dbReference type="Pumba" id="Q8BXZ1"/>
<dbReference type="Antibodypedia" id="2580">
    <property type="antibodies" value="101 antibodies from 20 providers"/>
</dbReference>
<dbReference type="DNASU" id="67988"/>
<dbReference type="Ensembl" id="ENSMUST00000025515.7">
    <property type="protein sequence ID" value="ENSMUSP00000025515.7"/>
    <property type="gene ID" value="ENSMUSG00000024614.8"/>
</dbReference>
<dbReference type="GeneID" id="67988"/>
<dbReference type="KEGG" id="mmu:67988"/>
<dbReference type="UCSC" id="uc008fvt.1">
    <property type="organism name" value="mouse"/>
</dbReference>
<dbReference type="AGR" id="MGI:2442418"/>
<dbReference type="CTD" id="54495"/>
<dbReference type="MGI" id="MGI:2442418">
    <property type="gene designation" value="Tmx3"/>
</dbReference>
<dbReference type="VEuPathDB" id="HostDB:ENSMUSG00000024614"/>
<dbReference type="eggNOG" id="KOG4277">
    <property type="taxonomic scope" value="Eukaryota"/>
</dbReference>
<dbReference type="GeneTree" id="ENSGT00930000151022"/>
<dbReference type="HOGENOM" id="CLU_040429_1_0_1"/>
<dbReference type="InParanoid" id="Q8BXZ1"/>
<dbReference type="OMA" id="GIEMRNM"/>
<dbReference type="OrthoDB" id="74910at2759"/>
<dbReference type="PhylomeDB" id="Q8BXZ1"/>
<dbReference type="TreeFam" id="TF313807"/>
<dbReference type="Reactome" id="R-MMU-114608">
    <property type="pathway name" value="Platelet degranulation"/>
</dbReference>
<dbReference type="BioGRID-ORCS" id="67988">
    <property type="hits" value="0 hits in 76 CRISPR screens"/>
</dbReference>
<dbReference type="ChiTaRS" id="Tmx3">
    <property type="organism name" value="mouse"/>
</dbReference>
<dbReference type="PRO" id="PR:Q8BXZ1"/>
<dbReference type="Proteomes" id="UP000000589">
    <property type="component" value="Chromosome 18"/>
</dbReference>
<dbReference type="RNAct" id="Q8BXZ1">
    <property type="molecule type" value="protein"/>
</dbReference>
<dbReference type="Bgee" id="ENSMUSG00000024614">
    <property type="expression patterns" value="Expressed in otolith organ and 223 other cell types or tissues"/>
</dbReference>
<dbReference type="ExpressionAtlas" id="Q8BXZ1">
    <property type="expression patterns" value="baseline and differential"/>
</dbReference>
<dbReference type="GO" id="GO:0009986">
    <property type="term" value="C:cell surface"/>
    <property type="evidence" value="ECO:0000314"/>
    <property type="project" value="MGI"/>
</dbReference>
<dbReference type="GO" id="GO:0005789">
    <property type="term" value="C:endoplasmic reticulum membrane"/>
    <property type="evidence" value="ECO:0007669"/>
    <property type="project" value="UniProtKB-SubCell"/>
</dbReference>
<dbReference type="GO" id="GO:0003756">
    <property type="term" value="F:protein disulfide isomerase activity"/>
    <property type="evidence" value="ECO:0007669"/>
    <property type="project" value="UniProtKB-EC"/>
</dbReference>
<dbReference type="GO" id="GO:0015035">
    <property type="term" value="F:protein-disulfide reductase activity"/>
    <property type="evidence" value="ECO:0007669"/>
    <property type="project" value="Ensembl"/>
</dbReference>
<dbReference type="CDD" id="cd03000">
    <property type="entry name" value="PDI_a_TMX3"/>
    <property type="match status" value="1"/>
</dbReference>
<dbReference type="FunFam" id="3.40.30.10:FF:000115">
    <property type="entry name" value="protein disulfide-isomerase TMX3 isoform X1"/>
    <property type="match status" value="1"/>
</dbReference>
<dbReference type="FunFam" id="3.40.30.10:FF:000121">
    <property type="entry name" value="protein disulfide-isomerase TMX3 isoform X1"/>
    <property type="match status" value="1"/>
</dbReference>
<dbReference type="Gene3D" id="3.40.30.10">
    <property type="entry name" value="Glutaredoxin"/>
    <property type="match status" value="2"/>
</dbReference>
<dbReference type="InterPro" id="IPR052250">
    <property type="entry name" value="PDI_TMX3"/>
</dbReference>
<dbReference type="InterPro" id="IPR036249">
    <property type="entry name" value="Thioredoxin-like_sf"/>
</dbReference>
<dbReference type="InterPro" id="IPR017937">
    <property type="entry name" value="Thioredoxin_CS"/>
</dbReference>
<dbReference type="InterPro" id="IPR013766">
    <property type="entry name" value="Thioredoxin_domain"/>
</dbReference>
<dbReference type="PANTHER" id="PTHR46426">
    <property type="entry name" value="PROTEIN DISULFIDE-ISOMERASE TMX3"/>
    <property type="match status" value="1"/>
</dbReference>
<dbReference type="PANTHER" id="PTHR46426:SF1">
    <property type="entry name" value="PROTEIN DISULFIDE-ISOMERASE TMX3"/>
    <property type="match status" value="1"/>
</dbReference>
<dbReference type="Pfam" id="PF00085">
    <property type="entry name" value="Thioredoxin"/>
    <property type="match status" value="1"/>
</dbReference>
<dbReference type="Pfam" id="PF13848">
    <property type="entry name" value="Thioredoxin_6"/>
    <property type="match status" value="1"/>
</dbReference>
<dbReference type="PRINTS" id="PR00421">
    <property type="entry name" value="THIOREDOXIN"/>
</dbReference>
<dbReference type="SUPFAM" id="SSF52833">
    <property type="entry name" value="Thioredoxin-like"/>
    <property type="match status" value="2"/>
</dbReference>
<dbReference type="PROSITE" id="PS00194">
    <property type="entry name" value="THIOREDOXIN_1"/>
    <property type="match status" value="1"/>
</dbReference>
<dbReference type="PROSITE" id="PS51352">
    <property type="entry name" value="THIOREDOXIN_2"/>
    <property type="match status" value="1"/>
</dbReference>
<gene>
    <name type="primary">Tmx3</name>
    <name type="synonym">Kiaa1830</name>
    <name type="synonym">Txndc10</name>
</gene>
<comment type="function">
    <text evidence="1">Probable disulfide isomerase, which participates in the folding of proteins containing disulfide bonds. May act as a dithiol oxidase. Acts as a regulator of endoplasmic reticulum-mitochondria contact sites via its ability to regulate redox signals.</text>
</comment>
<comment type="catalytic activity">
    <reaction evidence="1">
        <text>Catalyzes the rearrangement of -S-S- bonds in proteins.</text>
        <dbReference type="EC" id="5.3.4.1"/>
    </reaction>
</comment>
<comment type="subcellular location">
    <subcellularLocation>
        <location evidence="1">Endoplasmic reticulum membrane</location>
        <topology evidence="1">Single-pass membrane protein</topology>
    </subcellularLocation>
</comment>
<comment type="domain">
    <text evidence="3">The di-lysine motif confers endoplasmic reticulum localization for type I membrane proteins.</text>
</comment>
<comment type="similarity">
    <text evidence="7">Belongs to the protein disulfide isomerase family.</text>
</comment>
<comment type="sequence caution" evidence="7">
    <conflict type="erroneous initiation">
        <sequence resource="EMBL-CDS" id="BAC98261"/>
    </conflict>
</comment>
<comment type="sequence caution" evidence="7">
    <conflict type="frameshift">
        <sequence resource="EMBL" id="BC057139"/>
    </conflict>
</comment>
<name>TMX3_MOUSE</name>
<accession>Q8BXZ1</accession>
<accession>Q3US84</accession>
<accession>Q6PGA1</accession>
<accession>Q6ZPH5</accession>
<accession>Q8BZB8</accession>
<reference key="1">
    <citation type="journal article" date="2003" name="DNA Res.">
        <title>Prediction of the coding sequences of mouse homologues of KIAA gene: III. The complete nucleotide sequences of 500 mouse KIAA-homologous cDNAs identified by screening of terminal sequences of cDNA clones randomly sampled from size-fractionated libraries.</title>
        <authorList>
            <person name="Okazaki N."/>
            <person name="Kikuno R."/>
            <person name="Ohara R."/>
            <person name="Inamoto S."/>
            <person name="Koseki H."/>
            <person name="Hiraoka S."/>
            <person name="Saga Y."/>
            <person name="Nagase T."/>
            <person name="Ohara O."/>
            <person name="Koga H."/>
        </authorList>
    </citation>
    <scope>NUCLEOTIDE SEQUENCE [LARGE SCALE MRNA]</scope>
    <source>
        <tissue>Embryonic tail</tissue>
    </source>
</reference>
<reference key="2">
    <citation type="journal article" date="2005" name="Science">
        <title>The transcriptional landscape of the mammalian genome.</title>
        <authorList>
            <person name="Carninci P."/>
            <person name="Kasukawa T."/>
            <person name="Katayama S."/>
            <person name="Gough J."/>
            <person name="Frith M.C."/>
            <person name="Maeda N."/>
            <person name="Oyama R."/>
            <person name="Ravasi T."/>
            <person name="Lenhard B."/>
            <person name="Wells C."/>
            <person name="Kodzius R."/>
            <person name="Shimokawa K."/>
            <person name="Bajic V.B."/>
            <person name="Brenner S.E."/>
            <person name="Batalov S."/>
            <person name="Forrest A.R."/>
            <person name="Zavolan M."/>
            <person name="Davis M.J."/>
            <person name="Wilming L.G."/>
            <person name="Aidinis V."/>
            <person name="Allen J.E."/>
            <person name="Ambesi-Impiombato A."/>
            <person name="Apweiler R."/>
            <person name="Aturaliya R.N."/>
            <person name="Bailey T.L."/>
            <person name="Bansal M."/>
            <person name="Baxter L."/>
            <person name="Beisel K.W."/>
            <person name="Bersano T."/>
            <person name="Bono H."/>
            <person name="Chalk A.M."/>
            <person name="Chiu K.P."/>
            <person name="Choudhary V."/>
            <person name="Christoffels A."/>
            <person name="Clutterbuck D.R."/>
            <person name="Crowe M.L."/>
            <person name="Dalla E."/>
            <person name="Dalrymple B.P."/>
            <person name="de Bono B."/>
            <person name="Della Gatta G."/>
            <person name="di Bernardo D."/>
            <person name="Down T."/>
            <person name="Engstrom P."/>
            <person name="Fagiolini M."/>
            <person name="Faulkner G."/>
            <person name="Fletcher C.F."/>
            <person name="Fukushima T."/>
            <person name="Furuno M."/>
            <person name="Futaki S."/>
            <person name="Gariboldi M."/>
            <person name="Georgii-Hemming P."/>
            <person name="Gingeras T.R."/>
            <person name="Gojobori T."/>
            <person name="Green R.E."/>
            <person name="Gustincich S."/>
            <person name="Harbers M."/>
            <person name="Hayashi Y."/>
            <person name="Hensch T.K."/>
            <person name="Hirokawa N."/>
            <person name="Hill D."/>
            <person name="Huminiecki L."/>
            <person name="Iacono M."/>
            <person name="Ikeo K."/>
            <person name="Iwama A."/>
            <person name="Ishikawa T."/>
            <person name="Jakt M."/>
            <person name="Kanapin A."/>
            <person name="Katoh M."/>
            <person name="Kawasawa Y."/>
            <person name="Kelso J."/>
            <person name="Kitamura H."/>
            <person name="Kitano H."/>
            <person name="Kollias G."/>
            <person name="Krishnan S.P."/>
            <person name="Kruger A."/>
            <person name="Kummerfeld S.K."/>
            <person name="Kurochkin I.V."/>
            <person name="Lareau L.F."/>
            <person name="Lazarevic D."/>
            <person name="Lipovich L."/>
            <person name="Liu J."/>
            <person name="Liuni S."/>
            <person name="McWilliam S."/>
            <person name="Madan Babu M."/>
            <person name="Madera M."/>
            <person name="Marchionni L."/>
            <person name="Matsuda H."/>
            <person name="Matsuzawa S."/>
            <person name="Miki H."/>
            <person name="Mignone F."/>
            <person name="Miyake S."/>
            <person name="Morris K."/>
            <person name="Mottagui-Tabar S."/>
            <person name="Mulder N."/>
            <person name="Nakano N."/>
            <person name="Nakauchi H."/>
            <person name="Ng P."/>
            <person name="Nilsson R."/>
            <person name="Nishiguchi S."/>
            <person name="Nishikawa S."/>
            <person name="Nori F."/>
            <person name="Ohara O."/>
            <person name="Okazaki Y."/>
            <person name="Orlando V."/>
            <person name="Pang K.C."/>
            <person name="Pavan W.J."/>
            <person name="Pavesi G."/>
            <person name="Pesole G."/>
            <person name="Petrovsky N."/>
            <person name="Piazza S."/>
            <person name="Reed J."/>
            <person name="Reid J.F."/>
            <person name="Ring B.Z."/>
            <person name="Ringwald M."/>
            <person name="Rost B."/>
            <person name="Ruan Y."/>
            <person name="Salzberg S.L."/>
            <person name="Sandelin A."/>
            <person name="Schneider C."/>
            <person name="Schoenbach C."/>
            <person name="Sekiguchi K."/>
            <person name="Semple C.A."/>
            <person name="Seno S."/>
            <person name="Sessa L."/>
            <person name="Sheng Y."/>
            <person name="Shibata Y."/>
            <person name="Shimada H."/>
            <person name="Shimada K."/>
            <person name="Silva D."/>
            <person name="Sinclair B."/>
            <person name="Sperling S."/>
            <person name="Stupka E."/>
            <person name="Sugiura K."/>
            <person name="Sultana R."/>
            <person name="Takenaka Y."/>
            <person name="Taki K."/>
            <person name="Tammoja K."/>
            <person name="Tan S.L."/>
            <person name="Tang S."/>
            <person name="Taylor M.S."/>
            <person name="Tegner J."/>
            <person name="Teichmann S.A."/>
            <person name="Ueda H.R."/>
            <person name="van Nimwegen E."/>
            <person name="Verardo R."/>
            <person name="Wei C.L."/>
            <person name="Yagi K."/>
            <person name="Yamanishi H."/>
            <person name="Zabarovsky E."/>
            <person name="Zhu S."/>
            <person name="Zimmer A."/>
            <person name="Hide W."/>
            <person name="Bult C."/>
            <person name="Grimmond S.M."/>
            <person name="Teasdale R.D."/>
            <person name="Liu E.T."/>
            <person name="Brusic V."/>
            <person name="Quackenbush J."/>
            <person name="Wahlestedt C."/>
            <person name="Mattick J.S."/>
            <person name="Hume D.A."/>
            <person name="Kai C."/>
            <person name="Sasaki D."/>
            <person name="Tomaru Y."/>
            <person name="Fukuda S."/>
            <person name="Kanamori-Katayama M."/>
            <person name="Suzuki M."/>
            <person name="Aoki J."/>
            <person name="Arakawa T."/>
            <person name="Iida J."/>
            <person name="Imamura K."/>
            <person name="Itoh M."/>
            <person name="Kato T."/>
            <person name="Kawaji H."/>
            <person name="Kawagashira N."/>
            <person name="Kawashima T."/>
            <person name="Kojima M."/>
            <person name="Kondo S."/>
            <person name="Konno H."/>
            <person name="Nakano K."/>
            <person name="Ninomiya N."/>
            <person name="Nishio T."/>
            <person name="Okada M."/>
            <person name="Plessy C."/>
            <person name="Shibata K."/>
            <person name="Shiraki T."/>
            <person name="Suzuki S."/>
            <person name="Tagami M."/>
            <person name="Waki K."/>
            <person name="Watahiki A."/>
            <person name="Okamura-Oho Y."/>
            <person name="Suzuki H."/>
            <person name="Kawai J."/>
            <person name="Hayashizaki Y."/>
        </authorList>
    </citation>
    <scope>NUCLEOTIDE SEQUENCE [LARGE SCALE MRNA]</scope>
    <source>
        <strain>C57BL/6J</strain>
        <tissue>Cerebellum</tissue>
        <tissue>Corpus striatum</tissue>
    </source>
</reference>
<reference key="3">
    <citation type="journal article" date="2004" name="Genome Res.">
        <title>The status, quality, and expansion of the NIH full-length cDNA project: the Mammalian Gene Collection (MGC).</title>
        <authorList>
            <consortium name="The MGC Project Team"/>
        </authorList>
    </citation>
    <scope>NUCLEOTIDE SEQUENCE [LARGE SCALE MRNA]</scope>
    <source>
        <strain>FVB/N</strain>
        <tissue>Mammary tumor</tissue>
    </source>
</reference>
<reference key="4">
    <citation type="submission" date="2007-04" db="UniProtKB">
        <authorList>
            <person name="Lubec G."/>
            <person name="Kang S.U."/>
        </authorList>
    </citation>
    <scope>PROTEIN SEQUENCE OF 132-150 AND 368-375</scope>
    <scope>IDENTIFICATION BY MASS SPECTROMETRY</scope>
    <source>
        <strain>C57BL/6J</strain>
        <tissue>Brain</tissue>
    </source>
</reference>
<reference key="5">
    <citation type="journal article" date="2010" name="Cell">
        <title>A tissue-specific atlas of mouse protein phosphorylation and expression.</title>
        <authorList>
            <person name="Huttlin E.L."/>
            <person name="Jedrychowski M.P."/>
            <person name="Elias J.E."/>
            <person name="Goswami T."/>
            <person name="Rad R."/>
            <person name="Beausoleil S.A."/>
            <person name="Villen J."/>
            <person name="Haas W."/>
            <person name="Sowa M.E."/>
            <person name="Gygi S.P."/>
        </authorList>
    </citation>
    <scope>IDENTIFICATION BY MASS SPECTROMETRY [LARGE SCALE ANALYSIS]</scope>
    <source>
        <tissue>Brain</tissue>
        <tissue>Brown adipose tissue</tissue>
        <tissue>Heart</tissue>
        <tissue>Kidney</tissue>
        <tissue>Liver</tissue>
        <tissue>Lung</tissue>
        <tissue>Spleen</tissue>
        <tissue>Testis</tissue>
    </source>
</reference>
<proteinExistence type="evidence at protein level"/>
<sequence length="456" mass="51848">MANAVGRRSWAALRLCAAVILLDLAVCKGFVEDLNESFKDNRKDDIWLVDFYAPWCGHCKKLEPIWNEVGLEMKSIGSPVKVGKMDATSYSSIASEFGVRGYPTIKLLKGDLAYNYRGPRTKDDIIEFAHRVSGALIRPLPSQQMFDHVRKRHRVFFVYIGGESPLKEKYIDAASELIVYTYFFSASEDVVPEYVTLKEMPAVLVFKDDTYFVYDEYEDGDLSSWISRERFQNYLTMDGFLLYELGDTGKLVAIAVIDEKNTSLEHTRLKSIIQEVARDFRDHFHRDFQFGHMDGNDYINTLLMDELTVPTIVVLNTSNQQYFLLDRHIKDASDMVQFINSILDGTVPAQGGDSIFQRLKRIVFDAKSTIVSIFKSSPLMGCFLFGLPLGVISIMCYGIYTADTDGGYIEERYEVSKSEMENQEQIEESKEQESSSGGSLAPTVQEPKDVLEKKKD</sequence>
<protein>
    <recommendedName>
        <fullName>Protein disulfide-isomerase TMX3</fullName>
        <ecNumber evidence="1">5.3.4.1</ecNumber>
    </recommendedName>
    <alternativeName>
        <fullName>Thioredoxin domain-containing protein 10</fullName>
    </alternativeName>
    <alternativeName>
        <fullName>Thioredoxin-related transmembrane protein 3</fullName>
    </alternativeName>
</protein>
<feature type="signal peptide" evidence="4">
    <location>
        <begin position="1"/>
        <end position="29"/>
    </location>
</feature>
<feature type="chain" id="PRO_0000034186" description="Protein disulfide-isomerase TMX3">
    <location>
        <begin position="30"/>
        <end position="456"/>
    </location>
</feature>
<feature type="topological domain" description="Lumenal" evidence="4">
    <location>
        <begin position="30"/>
        <end position="378"/>
    </location>
</feature>
<feature type="transmembrane region" description="Helical" evidence="4">
    <location>
        <begin position="379"/>
        <end position="399"/>
    </location>
</feature>
<feature type="topological domain" description="Cytoplasmic" evidence="4">
    <location>
        <begin position="400"/>
        <end position="456"/>
    </location>
</feature>
<feature type="domain" description="Thioredoxin" evidence="5">
    <location>
        <begin position="30"/>
        <end position="131"/>
    </location>
</feature>
<feature type="region of interest" description="Disordered" evidence="6">
    <location>
        <begin position="416"/>
        <end position="456"/>
    </location>
</feature>
<feature type="short sequence motif" description="Di-lysine motif" evidence="4">
    <location>
        <begin position="453"/>
        <end position="456"/>
    </location>
</feature>
<feature type="compositionally biased region" description="Basic and acidic residues" evidence="6">
    <location>
        <begin position="446"/>
        <end position="456"/>
    </location>
</feature>
<feature type="active site" description="Nucleophile" evidence="2">
    <location>
        <position position="56"/>
    </location>
</feature>
<feature type="active site" description="Nucleophile" evidence="2">
    <location>
        <position position="59"/>
    </location>
</feature>
<feature type="glycosylation site" description="N-linked (GlcNAc...) asparagine" evidence="4">
    <location>
        <position position="35"/>
    </location>
</feature>
<feature type="glycosylation site" description="N-linked (GlcNAc...) asparagine" evidence="4">
    <location>
        <position position="261"/>
    </location>
</feature>
<feature type="glycosylation site" description="N-linked (GlcNAc...) asparagine" evidence="4">
    <location>
        <position position="316"/>
    </location>
</feature>
<feature type="disulfide bond" description="Redox-active" evidence="5">
    <location>
        <begin position="56"/>
        <end position="59"/>
    </location>
</feature>
<evidence type="ECO:0000250" key="1">
    <source>
        <dbReference type="UniProtKB" id="Q96JJ7"/>
    </source>
</evidence>
<evidence type="ECO:0000250" key="2">
    <source>
        <dbReference type="UniProtKB" id="Q9H3N1"/>
    </source>
</evidence>
<evidence type="ECO:0000250" key="3">
    <source>
        <dbReference type="UniProtKB" id="Q9Y320"/>
    </source>
</evidence>
<evidence type="ECO:0000255" key="4"/>
<evidence type="ECO:0000255" key="5">
    <source>
        <dbReference type="PROSITE-ProRule" id="PRU00691"/>
    </source>
</evidence>
<evidence type="ECO:0000256" key="6">
    <source>
        <dbReference type="SAM" id="MobiDB-lite"/>
    </source>
</evidence>
<evidence type="ECO:0000305" key="7"/>
<keyword id="KW-0903">Direct protein sequencing</keyword>
<keyword id="KW-1015">Disulfide bond</keyword>
<keyword id="KW-0256">Endoplasmic reticulum</keyword>
<keyword id="KW-0325">Glycoprotein</keyword>
<keyword id="KW-0413">Isomerase</keyword>
<keyword id="KW-0472">Membrane</keyword>
<keyword id="KW-0676">Redox-active center</keyword>
<keyword id="KW-1185">Reference proteome</keyword>
<keyword id="KW-0732">Signal</keyword>
<keyword id="KW-0812">Transmembrane</keyword>
<keyword id="KW-1133">Transmembrane helix</keyword>
<organism>
    <name type="scientific">Mus musculus</name>
    <name type="common">Mouse</name>
    <dbReference type="NCBI Taxonomy" id="10090"/>
    <lineage>
        <taxon>Eukaryota</taxon>
        <taxon>Metazoa</taxon>
        <taxon>Chordata</taxon>
        <taxon>Craniata</taxon>
        <taxon>Vertebrata</taxon>
        <taxon>Euteleostomi</taxon>
        <taxon>Mammalia</taxon>
        <taxon>Eutheria</taxon>
        <taxon>Euarchontoglires</taxon>
        <taxon>Glires</taxon>
        <taxon>Rodentia</taxon>
        <taxon>Myomorpha</taxon>
        <taxon>Muroidea</taxon>
        <taxon>Muridae</taxon>
        <taxon>Murinae</taxon>
        <taxon>Mus</taxon>
        <taxon>Mus</taxon>
    </lineage>
</organism>